<reference key="1">
    <citation type="journal article" date="2000" name="Nature">
        <title>Sequence and analysis of chromosome 3 of the plant Arabidopsis thaliana.</title>
        <authorList>
            <person name="Salanoubat M."/>
            <person name="Lemcke K."/>
            <person name="Rieger M."/>
            <person name="Ansorge W."/>
            <person name="Unseld M."/>
            <person name="Fartmann B."/>
            <person name="Valle G."/>
            <person name="Bloecker H."/>
            <person name="Perez-Alonso M."/>
            <person name="Obermaier B."/>
            <person name="Delseny M."/>
            <person name="Boutry M."/>
            <person name="Grivell L.A."/>
            <person name="Mache R."/>
            <person name="Puigdomenech P."/>
            <person name="De Simone V."/>
            <person name="Choisne N."/>
            <person name="Artiguenave F."/>
            <person name="Robert C."/>
            <person name="Brottier P."/>
            <person name="Wincker P."/>
            <person name="Cattolico L."/>
            <person name="Weissenbach J."/>
            <person name="Saurin W."/>
            <person name="Quetier F."/>
            <person name="Schaefer M."/>
            <person name="Mueller-Auer S."/>
            <person name="Gabel C."/>
            <person name="Fuchs M."/>
            <person name="Benes V."/>
            <person name="Wurmbach E."/>
            <person name="Drzonek H."/>
            <person name="Erfle H."/>
            <person name="Jordan N."/>
            <person name="Bangert S."/>
            <person name="Wiedelmann R."/>
            <person name="Kranz H."/>
            <person name="Voss H."/>
            <person name="Holland R."/>
            <person name="Brandt P."/>
            <person name="Nyakatura G."/>
            <person name="Vezzi A."/>
            <person name="D'Angelo M."/>
            <person name="Pallavicini A."/>
            <person name="Toppo S."/>
            <person name="Simionati B."/>
            <person name="Conrad A."/>
            <person name="Hornischer K."/>
            <person name="Kauer G."/>
            <person name="Loehnert T.-H."/>
            <person name="Nordsiek G."/>
            <person name="Reichelt J."/>
            <person name="Scharfe M."/>
            <person name="Schoen O."/>
            <person name="Bargues M."/>
            <person name="Terol J."/>
            <person name="Climent J."/>
            <person name="Navarro P."/>
            <person name="Collado C."/>
            <person name="Perez-Perez A."/>
            <person name="Ottenwaelder B."/>
            <person name="Duchemin D."/>
            <person name="Cooke R."/>
            <person name="Laudie M."/>
            <person name="Berger-Llauro C."/>
            <person name="Purnelle B."/>
            <person name="Masuy D."/>
            <person name="de Haan M."/>
            <person name="Maarse A.C."/>
            <person name="Alcaraz J.-P."/>
            <person name="Cottet A."/>
            <person name="Casacuberta E."/>
            <person name="Monfort A."/>
            <person name="Argiriou A."/>
            <person name="Flores M."/>
            <person name="Liguori R."/>
            <person name="Vitale D."/>
            <person name="Mannhaupt G."/>
            <person name="Haase D."/>
            <person name="Schoof H."/>
            <person name="Rudd S."/>
            <person name="Zaccaria P."/>
            <person name="Mewes H.-W."/>
            <person name="Mayer K.F.X."/>
            <person name="Kaul S."/>
            <person name="Town C.D."/>
            <person name="Koo H.L."/>
            <person name="Tallon L.J."/>
            <person name="Jenkins J."/>
            <person name="Rooney T."/>
            <person name="Rizzo M."/>
            <person name="Walts A."/>
            <person name="Utterback T."/>
            <person name="Fujii C.Y."/>
            <person name="Shea T.P."/>
            <person name="Creasy T.H."/>
            <person name="Haas B."/>
            <person name="Maiti R."/>
            <person name="Wu D."/>
            <person name="Peterson J."/>
            <person name="Van Aken S."/>
            <person name="Pai G."/>
            <person name="Militscher J."/>
            <person name="Sellers P."/>
            <person name="Gill J.E."/>
            <person name="Feldblyum T.V."/>
            <person name="Preuss D."/>
            <person name="Lin X."/>
            <person name="Nierman W.C."/>
            <person name="Salzberg S.L."/>
            <person name="White O."/>
            <person name="Venter J.C."/>
            <person name="Fraser C.M."/>
            <person name="Kaneko T."/>
            <person name="Nakamura Y."/>
            <person name="Sato S."/>
            <person name="Kato T."/>
            <person name="Asamizu E."/>
            <person name="Sasamoto S."/>
            <person name="Kimura T."/>
            <person name="Idesawa K."/>
            <person name="Kawashima K."/>
            <person name="Kishida Y."/>
            <person name="Kiyokawa C."/>
            <person name="Kohara M."/>
            <person name="Matsumoto M."/>
            <person name="Matsuno A."/>
            <person name="Muraki A."/>
            <person name="Nakayama S."/>
            <person name="Nakazaki N."/>
            <person name="Shinpo S."/>
            <person name="Takeuchi C."/>
            <person name="Wada T."/>
            <person name="Watanabe A."/>
            <person name="Yamada M."/>
            <person name="Yasuda M."/>
            <person name="Tabata S."/>
        </authorList>
    </citation>
    <scope>NUCLEOTIDE SEQUENCE [LARGE SCALE GENOMIC DNA]</scope>
    <source>
        <strain>cv. Columbia</strain>
    </source>
</reference>
<reference key="2">
    <citation type="journal article" date="2017" name="Plant J.">
        <title>Araport11: a complete reannotation of the Arabidopsis thaliana reference genome.</title>
        <authorList>
            <person name="Cheng C.Y."/>
            <person name="Krishnakumar V."/>
            <person name="Chan A.P."/>
            <person name="Thibaud-Nissen F."/>
            <person name="Schobel S."/>
            <person name="Town C.D."/>
        </authorList>
    </citation>
    <scope>GENOME REANNOTATION</scope>
    <source>
        <strain>cv. Columbia</strain>
    </source>
</reference>
<reference key="3">
    <citation type="journal article" date="2003" name="Science">
        <title>Empirical analysis of transcriptional activity in the Arabidopsis genome.</title>
        <authorList>
            <person name="Yamada K."/>
            <person name="Lim J."/>
            <person name="Dale J.M."/>
            <person name="Chen H."/>
            <person name="Shinn P."/>
            <person name="Palm C.J."/>
            <person name="Southwick A.M."/>
            <person name="Wu H.C."/>
            <person name="Kim C.J."/>
            <person name="Nguyen M."/>
            <person name="Pham P.K."/>
            <person name="Cheuk R.F."/>
            <person name="Karlin-Newmann G."/>
            <person name="Liu S.X."/>
            <person name="Lam B."/>
            <person name="Sakano H."/>
            <person name="Wu T."/>
            <person name="Yu G."/>
            <person name="Miranda M."/>
            <person name="Quach H.L."/>
            <person name="Tripp M."/>
            <person name="Chang C.H."/>
            <person name="Lee J.M."/>
            <person name="Toriumi M.J."/>
            <person name="Chan M.M."/>
            <person name="Tang C.C."/>
            <person name="Onodera C.S."/>
            <person name="Deng J.M."/>
            <person name="Akiyama K."/>
            <person name="Ansari Y."/>
            <person name="Arakawa T."/>
            <person name="Banh J."/>
            <person name="Banno F."/>
            <person name="Bowser L."/>
            <person name="Brooks S.Y."/>
            <person name="Carninci P."/>
            <person name="Chao Q."/>
            <person name="Choy N."/>
            <person name="Enju A."/>
            <person name="Goldsmith A.D."/>
            <person name="Gurjal M."/>
            <person name="Hansen N.F."/>
            <person name="Hayashizaki Y."/>
            <person name="Johnson-Hopson C."/>
            <person name="Hsuan V.W."/>
            <person name="Iida K."/>
            <person name="Karnes M."/>
            <person name="Khan S."/>
            <person name="Koesema E."/>
            <person name="Ishida J."/>
            <person name="Jiang P.X."/>
            <person name="Jones T."/>
            <person name="Kawai J."/>
            <person name="Kamiya A."/>
            <person name="Meyers C."/>
            <person name="Nakajima M."/>
            <person name="Narusaka M."/>
            <person name="Seki M."/>
            <person name="Sakurai T."/>
            <person name="Satou M."/>
            <person name="Tamse R."/>
            <person name="Vaysberg M."/>
            <person name="Wallender E.K."/>
            <person name="Wong C."/>
            <person name="Yamamura Y."/>
            <person name="Yuan S."/>
            <person name="Shinozaki K."/>
            <person name="Davis R.W."/>
            <person name="Theologis A."/>
            <person name="Ecker J.R."/>
        </authorList>
    </citation>
    <scope>NUCLEOTIDE SEQUENCE [LARGE SCALE MRNA]</scope>
    <source>
        <strain>cv. Columbia</strain>
    </source>
</reference>
<reference key="4">
    <citation type="submission" date="2006-06" db="EMBL/GenBank/DDBJ databases">
        <title>Arabidopsis ORF clones.</title>
        <authorList>
            <person name="Shinn P."/>
            <person name="Chen H."/>
            <person name="Kim C.J."/>
            <person name="Quinitio C."/>
            <person name="Ecker J.R."/>
        </authorList>
    </citation>
    <scope>NUCLEOTIDE SEQUENCE [LARGE SCALE MRNA]</scope>
    <source>
        <strain>cv. Columbia</strain>
    </source>
</reference>
<gene>
    <name type="ordered locus">At3g07870</name>
    <name type="ORF">F17A17.21</name>
</gene>
<accession>Q9SFC7</accession>
<proteinExistence type="evidence at transcript level"/>
<name>FB135_ARATH</name>
<dbReference type="EMBL" id="AC013483">
    <property type="protein sequence ID" value="AAF21197.1"/>
    <property type="molecule type" value="Genomic_DNA"/>
</dbReference>
<dbReference type="EMBL" id="CP002686">
    <property type="protein sequence ID" value="AEE74613.1"/>
    <property type="molecule type" value="Genomic_DNA"/>
</dbReference>
<dbReference type="EMBL" id="AF424614">
    <property type="protein sequence ID" value="AAL11607.1"/>
    <property type="molecule type" value="mRNA"/>
</dbReference>
<dbReference type="EMBL" id="BT025979">
    <property type="protein sequence ID" value="ABG25068.1"/>
    <property type="molecule type" value="mRNA"/>
</dbReference>
<dbReference type="RefSeq" id="NP_566322.1">
    <property type="nucleotide sequence ID" value="NM_111666.4"/>
</dbReference>
<dbReference type="FunCoup" id="Q9SFC7">
    <property type="interactions" value="330"/>
</dbReference>
<dbReference type="STRING" id="3702.Q9SFC7"/>
<dbReference type="PaxDb" id="3702-AT3G07870.1"/>
<dbReference type="EnsemblPlants" id="AT3G07870.1">
    <property type="protein sequence ID" value="AT3G07870.1"/>
    <property type="gene ID" value="AT3G07870"/>
</dbReference>
<dbReference type="GeneID" id="819978"/>
<dbReference type="Gramene" id="AT3G07870.1">
    <property type="protein sequence ID" value="AT3G07870.1"/>
    <property type="gene ID" value="AT3G07870"/>
</dbReference>
<dbReference type="KEGG" id="ath:AT3G07870"/>
<dbReference type="Araport" id="AT3G07870"/>
<dbReference type="TAIR" id="AT3G07870">
    <property type="gene designation" value="FBX92"/>
</dbReference>
<dbReference type="eggNOG" id="ENOG502QS4I">
    <property type="taxonomic scope" value="Eukaryota"/>
</dbReference>
<dbReference type="HOGENOM" id="CLU_027176_1_2_1"/>
<dbReference type="InParanoid" id="Q9SFC7"/>
<dbReference type="OMA" id="WGKEYSI"/>
<dbReference type="OrthoDB" id="1894463at2759"/>
<dbReference type="PhylomeDB" id="Q9SFC7"/>
<dbReference type="PRO" id="PR:Q9SFC7"/>
<dbReference type="Proteomes" id="UP000006548">
    <property type="component" value="Chromosome 3"/>
</dbReference>
<dbReference type="ExpressionAtlas" id="Q9SFC7">
    <property type="expression patterns" value="baseline and differential"/>
</dbReference>
<dbReference type="GO" id="GO:0009506">
    <property type="term" value="C:plasmodesma"/>
    <property type="evidence" value="ECO:0007005"/>
    <property type="project" value="TAIR"/>
</dbReference>
<dbReference type="GO" id="GO:0008284">
    <property type="term" value="P:positive regulation of cell population proliferation"/>
    <property type="evidence" value="ECO:0000315"/>
    <property type="project" value="TAIR"/>
</dbReference>
<dbReference type="Gene3D" id="1.20.1280.50">
    <property type="match status" value="1"/>
</dbReference>
<dbReference type="InterPro" id="IPR017451">
    <property type="entry name" value="F-box-assoc_interact_dom"/>
</dbReference>
<dbReference type="InterPro" id="IPR036047">
    <property type="entry name" value="F-box-like_dom_sf"/>
</dbReference>
<dbReference type="InterPro" id="IPR001810">
    <property type="entry name" value="F-box_dom"/>
</dbReference>
<dbReference type="InterPro" id="IPR005174">
    <property type="entry name" value="KIB1-4_b-propeller"/>
</dbReference>
<dbReference type="InterPro" id="IPR050796">
    <property type="entry name" value="SCF_F-box_component"/>
</dbReference>
<dbReference type="NCBIfam" id="TIGR01640">
    <property type="entry name" value="F_box_assoc_1"/>
    <property type="match status" value="1"/>
</dbReference>
<dbReference type="PANTHER" id="PTHR31672">
    <property type="entry name" value="BNACNNG10540D PROTEIN"/>
    <property type="match status" value="1"/>
</dbReference>
<dbReference type="PANTHER" id="PTHR31672:SF2">
    <property type="entry name" value="F-BOX DOMAIN-CONTAINING PROTEIN"/>
    <property type="match status" value="1"/>
</dbReference>
<dbReference type="Pfam" id="PF03478">
    <property type="entry name" value="Beta-prop_KIB1-4"/>
    <property type="match status" value="1"/>
</dbReference>
<dbReference type="Pfam" id="PF00646">
    <property type="entry name" value="F-box"/>
    <property type="match status" value="1"/>
</dbReference>
<dbReference type="SMART" id="SM00256">
    <property type="entry name" value="FBOX"/>
    <property type="match status" value="1"/>
</dbReference>
<dbReference type="SUPFAM" id="SSF81383">
    <property type="entry name" value="F-box domain"/>
    <property type="match status" value="1"/>
</dbReference>
<dbReference type="PROSITE" id="PS50181">
    <property type="entry name" value="FBOX"/>
    <property type="match status" value="1"/>
</dbReference>
<keyword id="KW-1185">Reference proteome</keyword>
<protein>
    <recommendedName>
        <fullName>F-box protein At3g07870</fullName>
    </recommendedName>
</protein>
<feature type="chain" id="PRO_0000283406" description="F-box protein At3g07870">
    <location>
        <begin position="1"/>
        <end position="417"/>
    </location>
</feature>
<feature type="domain" description="F-box" evidence="1">
    <location>
        <begin position="22"/>
        <end position="68"/>
    </location>
</feature>
<sequence>MASEKSFKKRKITDDVDGVGVGGGLESLPEDIIADIFSRLPISSIARLMFVCRSWRSVLTQHGRLSSSSSSPTKPCLLLHCDSPIRNGLHFLDLSEEEKRIKTKKFTLRFASSMPEFDVVGSCNGLLCLSDSLYNDSLYLYNPFTTNSLELPECSNKYHDQELVFGFGFHEMTKEYKVLKIVYFRGSSSNNNGIYRGRGRIQYKQSEVQILTLSSKTTDQSLSWRSLGKAPYKFVKRSSEALVNGRLHFVTRPRRHVPDRKFVSFDLEDEEFKEIPKPDCGGLNRTNHRLVNLKGCLCAVVYGNYGKLDIWVMKTYGVKESWGKEYSIGTYLPKGLKQNLDRPMWIWKNAENGKVVRVLCLLENGEILLEYKSRVLVAYDPKLGKFKDLLFHGLPNWFHTVVHAGTLSWFDTPLDLW</sequence>
<organism>
    <name type="scientific">Arabidopsis thaliana</name>
    <name type="common">Mouse-ear cress</name>
    <dbReference type="NCBI Taxonomy" id="3702"/>
    <lineage>
        <taxon>Eukaryota</taxon>
        <taxon>Viridiplantae</taxon>
        <taxon>Streptophyta</taxon>
        <taxon>Embryophyta</taxon>
        <taxon>Tracheophyta</taxon>
        <taxon>Spermatophyta</taxon>
        <taxon>Magnoliopsida</taxon>
        <taxon>eudicotyledons</taxon>
        <taxon>Gunneridae</taxon>
        <taxon>Pentapetalae</taxon>
        <taxon>rosids</taxon>
        <taxon>malvids</taxon>
        <taxon>Brassicales</taxon>
        <taxon>Brassicaceae</taxon>
        <taxon>Camelineae</taxon>
        <taxon>Arabidopsis</taxon>
    </lineage>
</organism>
<evidence type="ECO:0000255" key="1">
    <source>
        <dbReference type="PROSITE-ProRule" id="PRU00080"/>
    </source>
</evidence>